<accession>O52028</accession>
<name>ARSD_HALSA</name>
<dbReference type="EMBL" id="AF016485">
    <property type="protein sequence ID" value="AAC82908.1"/>
    <property type="molecule type" value="Genomic_DNA"/>
</dbReference>
<dbReference type="PIR" id="T08341">
    <property type="entry name" value="T08341"/>
</dbReference>
<dbReference type="RefSeq" id="WP_010890457.1">
    <property type="nucleotide sequence ID" value="NZ_BK010830.1"/>
</dbReference>
<dbReference type="SMR" id="O52028"/>
<dbReference type="GeneID" id="89350681"/>
<dbReference type="KEGG" id="hal:arsD"/>
<dbReference type="HOGENOM" id="CLU_120868_1_0_2"/>
<dbReference type="InParanoid" id="O52028"/>
<dbReference type="OrthoDB" id="145187at2157"/>
<dbReference type="PhylomeDB" id="O52028"/>
<dbReference type="Proteomes" id="UP000000554">
    <property type="component" value="Plasmid pNRC100"/>
</dbReference>
<dbReference type="GO" id="GO:0003677">
    <property type="term" value="F:DNA binding"/>
    <property type="evidence" value="ECO:0007669"/>
    <property type="project" value="UniProtKB-KW"/>
</dbReference>
<dbReference type="GO" id="GO:0045892">
    <property type="term" value="P:negative regulation of DNA-templated transcription"/>
    <property type="evidence" value="ECO:0007669"/>
    <property type="project" value="InterPro"/>
</dbReference>
<dbReference type="GO" id="GO:0046685">
    <property type="term" value="P:response to arsenic-containing substance"/>
    <property type="evidence" value="ECO:0007669"/>
    <property type="project" value="UniProtKB-KW"/>
</dbReference>
<dbReference type="Gene3D" id="3.40.30.10">
    <property type="entry name" value="Glutaredoxin"/>
    <property type="match status" value="1"/>
</dbReference>
<dbReference type="InterPro" id="IPR010712">
    <property type="entry name" value="Arsenical-R_ArsD"/>
</dbReference>
<dbReference type="NCBIfam" id="NF033727">
    <property type="entry name" value="chaperon_ArsD"/>
    <property type="match status" value="1"/>
</dbReference>
<dbReference type="Pfam" id="PF06953">
    <property type="entry name" value="ArsD"/>
    <property type="match status" value="1"/>
</dbReference>
<evidence type="ECO:0000250" key="1"/>
<evidence type="ECO:0000269" key="2">
    <source>
    </source>
</evidence>
<geneLocation type="plasmid">
    <name>pNRC100</name>
</geneLocation>
<proteinExistence type="evidence at transcript level"/>
<protein>
    <recommendedName>
        <fullName>Putative arsenical resistance operon repressor ArsD</fullName>
    </recommendedName>
</protein>
<sequence>MTQLTLYEEAMCCSTGVCGPDPDDELVEVSAALDQLENEFDVDVSRANMQHNIEQFLETQQIADLVEEHGPSILPITVVNDEIVARETYLSYDELASTFEDSPDPQEA</sequence>
<organism>
    <name type="scientific">Halobacterium salinarum (strain ATCC 700922 / JCM 11081 / NRC-1)</name>
    <name type="common">Halobacterium halobium</name>
    <dbReference type="NCBI Taxonomy" id="64091"/>
    <lineage>
        <taxon>Archaea</taxon>
        <taxon>Methanobacteriati</taxon>
        <taxon>Methanobacteriota</taxon>
        <taxon>Stenosarchaea group</taxon>
        <taxon>Halobacteria</taxon>
        <taxon>Halobacteriales</taxon>
        <taxon>Halobacteriaceae</taxon>
        <taxon>Halobacterium</taxon>
        <taxon>Halobacterium salinarum NRC-34001</taxon>
    </lineage>
</organism>
<comment type="function">
    <text evidence="1">Trans-acting repressor of the arsADRC operon.</text>
</comment>
<comment type="induction">
    <text evidence="2">By arsenite and antimonite.</text>
</comment>
<comment type="disruption phenotype">
    <text evidence="2">Deletion of the arsADRC operon results in increased sensitivity to arsenite and antimonite but not arsenate.</text>
</comment>
<gene>
    <name type="primary">arsD</name>
    <name type="ordered locus">VNG_5181G</name>
</gene>
<reference key="1">
    <citation type="journal article" date="1998" name="Genome Res.">
        <title>Snapshot of a large dynamic replicon in a halophilic archaeon: megaplasmid or minichromosome?</title>
        <authorList>
            <person name="Ng W.V."/>
            <person name="Ciufo S.A."/>
            <person name="Smith T.M."/>
            <person name="Bumgarner R.E."/>
            <person name="Baskin D."/>
            <person name="Faust J."/>
            <person name="Hall B."/>
            <person name="Loretz C."/>
            <person name="Seto J."/>
            <person name="Slagel J."/>
            <person name="Hood L."/>
            <person name="DasSarma S."/>
        </authorList>
    </citation>
    <scope>NUCLEOTIDE SEQUENCE [LARGE SCALE GENOMIC DNA]</scope>
    <source>
        <strain>ATCC 700922 / JCM 11081 / NRC-1</strain>
    </source>
</reference>
<reference key="2">
    <citation type="journal article" date="2000" name="Proc. Natl. Acad. Sci. U.S.A.">
        <title>Genome sequence of Halobacterium species NRC-1.</title>
        <authorList>
            <person name="Ng W.V."/>
            <person name="Kennedy S.P."/>
            <person name="Mahairas G.G."/>
            <person name="Berquist B."/>
            <person name="Pan M."/>
            <person name="Shukla H.D."/>
            <person name="Lasky S.R."/>
            <person name="Baliga N.S."/>
            <person name="Thorsson V."/>
            <person name="Sbrogna J."/>
            <person name="Swartzell S."/>
            <person name="Weir D."/>
            <person name="Hall J."/>
            <person name="Dahl T.A."/>
            <person name="Welti R."/>
            <person name="Goo Y.A."/>
            <person name="Leithauser B."/>
            <person name="Keller K."/>
            <person name="Cruz R."/>
            <person name="Danson M.J."/>
            <person name="Hough D.W."/>
            <person name="Maddocks D.G."/>
            <person name="Jablonski P.E."/>
            <person name="Krebs M.P."/>
            <person name="Angevine C.M."/>
            <person name="Dale H."/>
            <person name="Isenbarger T.A."/>
            <person name="Peck R.F."/>
            <person name="Pohlschroder M."/>
            <person name="Spudich J.L."/>
            <person name="Jung K.-H."/>
            <person name="Alam M."/>
            <person name="Freitas T."/>
            <person name="Hou S."/>
            <person name="Daniels C.J."/>
            <person name="Dennis P.P."/>
            <person name="Omer A.D."/>
            <person name="Ebhardt H."/>
            <person name="Lowe T.M."/>
            <person name="Liang P."/>
            <person name="Riley M."/>
            <person name="Hood L."/>
            <person name="DasSarma S."/>
        </authorList>
    </citation>
    <scope>NUCLEOTIDE SEQUENCE [LARGE SCALE GENOMIC DNA]</scope>
    <source>
        <strain>ATCC 700922 / JCM 11081 / NRC-1</strain>
    </source>
</reference>
<reference key="3">
    <citation type="journal article" date="2004" name="J. Bacteriol.">
        <title>Arsenic resistance in Halobacterium sp. strain NRC-1 examined by using an improved gene knockout system.</title>
        <authorList>
            <person name="Wang G."/>
            <person name="Kennedy S.P."/>
            <person name="Fasiludeen S."/>
            <person name="Rensing C."/>
            <person name="DasSarma S."/>
        </authorList>
    </citation>
    <scope>INDUCTION</scope>
    <scope>DISRUPTION PHENOTYPE</scope>
    <source>
        <strain>ATCC 700922 / JCM 11081 / NRC-1</strain>
    </source>
</reference>
<feature type="chain" id="PRO_0000429113" description="Putative arsenical resistance operon repressor ArsD">
    <location>
        <begin position="1"/>
        <end position="108"/>
    </location>
</feature>
<keyword id="KW-0059">Arsenical resistance</keyword>
<keyword id="KW-0238">DNA-binding</keyword>
<keyword id="KW-0614">Plasmid</keyword>
<keyword id="KW-1185">Reference proteome</keyword>
<keyword id="KW-0678">Repressor</keyword>
<keyword id="KW-0804">Transcription</keyword>
<keyword id="KW-0805">Transcription regulation</keyword>